<protein>
    <recommendedName>
        <fullName>Fibroblast growth factor 1</fullName>
        <shortName>FGF-1</shortName>
    </recommendedName>
    <alternativeName>
        <fullName>Acidic fibroblast growth factor</fullName>
        <shortName>aFGF</shortName>
    </alternativeName>
    <alternativeName>
        <fullName>Heparin-binding growth factor 1</fullName>
        <shortName>HBGF-1</shortName>
    </alternativeName>
</protein>
<sequence length="155" mass="17460">MAEGEITTFTALTEKFNLPPGNYKKPKLLYCSNGGHFLRILPDGTVDGTRDRSDQHIQLQLSAESVGEVYIKSTETGQYLAMDTDGLLYGSQTPNEECLFLERLEENHYNTYISKKHAEKNWFVGLKKNGSCKRGPRTHYGQKAILFLPLPVSSD</sequence>
<name>FGF1_PONAB</name>
<gene>
    <name type="primary">FGF1</name>
</gene>
<comment type="function">
    <text evidence="3">Plays an important role in the regulation of cell survival, cell division, angiogenesis, cell differentiation and cell migration. Functions as a potent mitogen in vitro. Acts as a ligand for FGFR1 and integrins. Binds to FGFR1 in the presence of heparin leading to FGFR1 dimerization and activation via sequential autophosphorylation on tyrosine residues which act as docking sites for interacting proteins, leading to the activation of several signaling cascades. Binds to integrin ITGAV:ITGB3. Its binding to integrin, subsequent ternary complex formation with integrin and FGFR1, and the recruitment of PTPN11 to the complex are essential for FGF1 signaling. Induces the phosphorylation and activation of FGFR1, FRS2, MAPK3/ERK1, MAPK1/ERK2 and AKT1. Can induce angiogenesis.</text>
</comment>
<comment type="subunit">
    <text evidence="3">Monomer. Homodimer. Interacts with FGFR1, FGFR2, FGFR3 and FGFR4. Affinity between fibroblast growth factors (FGFs) and their receptors is increased by heparan sulfate glycosaminoglycans that function as coreceptors. Found in a complex with FGFBP1, FGF1 and FGF2. Interacts with FGFBP1. Part of a Cu(2+)-dependent multiprotein aggregate containing FGF1, S100A13 and SYT1. Interacts with SYT1. Interacts with S100A13 (By similarity). Interacts with LRRC59 (By similarity). Interacts with CSNKA, CSNKB and FIBP (By similarity). While binding with LRRC59, CSNKA and FIBP seem mutually exclusive, CSNKB and FIBP may cooperatively interact with FGF1. Forms a ternary complex with FGFR1 and ITGAV:ITGB3 and induces the recruitment of PTPN11 to the complex (By similarity).</text>
</comment>
<comment type="subcellular location">
    <subcellularLocation>
        <location>Secreted</location>
    </subcellularLocation>
    <subcellularLocation>
        <location evidence="1">Cytoplasm</location>
    </subcellularLocation>
    <subcellularLocation>
        <location evidence="1">Cytoplasm</location>
        <location evidence="1">Cell cortex</location>
    </subcellularLocation>
    <subcellularLocation>
        <location evidence="1">Cytoplasm</location>
        <location evidence="1">Cytosol</location>
    </subcellularLocation>
    <subcellularLocation>
        <location evidence="1">Nucleus</location>
    </subcellularLocation>
    <text evidence="1">Lacks a cleavable signal sequence. Within the cytoplasm, it is transported to the cell membrane and then secreted by a non-classical pathway that requires Cu(2+) ions and S100A13. Secreted in a complex with SYT1. Binding of exogenous FGF1 to FGFR facilitates endocytosis followed by translocation of FGF1 across endosomal membrane into the cytosol. Nuclear import from the cytosol requires the classical nuclear import machinery, involving proteins KPNA1 and KPNB1, as well as LRRC59 (By similarity).</text>
</comment>
<comment type="PTM">
    <text evidence="1">In the nucleus, phosphorylated by PKC/PRKCD.</text>
</comment>
<comment type="similarity">
    <text evidence="4">Belongs to the heparin-binding growth factors family.</text>
</comment>
<comment type="sequence caution" evidence="4">
    <conflict type="erroneous initiation">
        <sequence resource="EMBL-CDS" id="CAI29610"/>
    </conflict>
</comment>
<evidence type="ECO:0000250" key="1"/>
<evidence type="ECO:0000250" key="2">
    <source>
        <dbReference type="UniProtKB" id="P03968"/>
    </source>
</evidence>
<evidence type="ECO:0000250" key="3">
    <source>
        <dbReference type="UniProtKB" id="P05230"/>
    </source>
</evidence>
<evidence type="ECO:0000305" key="4"/>
<organism>
    <name type="scientific">Pongo abelii</name>
    <name type="common">Sumatran orangutan</name>
    <name type="synonym">Pongo pygmaeus abelii</name>
    <dbReference type="NCBI Taxonomy" id="9601"/>
    <lineage>
        <taxon>Eukaryota</taxon>
        <taxon>Metazoa</taxon>
        <taxon>Chordata</taxon>
        <taxon>Craniata</taxon>
        <taxon>Vertebrata</taxon>
        <taxon>Euteleostomi</taxon>
        <taxon>Mammalia</taxon>
        <taxon>Eutheria</taxon>
        <taxon>Euarchontoglires</taxon>
        <taxon>Primates</taxon>
        <taxon>Haplorrhini</taxon>
        <taxon>Catarrhini</taxon>
        <taxon>Hominidae</taxon>
        <taxon>Pongo</taxon>
    </lineage>
</organism>
<keyword id="KW-0007">Acetylation</keyword>
<keyword id="KW-0037">Angiogenesis</keyword>
<keyword id="KW-0963">Cytoplasm</keyword>
<keyword id="KW-0217">Developmental protein</keyword>
<keyword id="KW-0221">Differentiation</keyword>
<keyword id="KW-0339">Growth factor</keyword>
<keyword id="KW-0358">Heparin-binding</keyword>
<keyword id="KW-0497">Mitogen</keyword>
<keyword id="KW-0539">Nucleus</keyword>
<keyword id="KW-0597">Phosphoprotein</keyword>
<keyword id="KW-1185">Reference proteome</keyword>
<keyword id="KW-0964">Secreted</keyword>
<reference key="1">
    <citation type="submission" date="2004-11" db="EMBL/GenBank/DDBJ databases">
        <authorList>
            <consortium name="The German cDNA consortium"/>
        </authorList>
    </citation>
    <scope>NUCLEOTIDE SEQUENCE [LARGE SCALE MRNA]</scope>
    <source>
        <tissue>Brain cortex</tissue>
    </source>
</reference>
<feature type="initiator methionine" description="Removed" evidence="2">
    <location>
        <position position="1"/>
    </location>
</feature>
<feature type="propeptide" id="PRO_0000043356" evidence="1">
    <location>
        <begin position="2"/>
        <end position="15"/>
    </location>
</feature>
<feature type="chain" id="PRO_0000043357" description="Fibroblast growth factor 1">
    <location>
        <begin position="16"/>
        <end position="155"/>
    </location>
</feature>
<feature type="region of interest" description="Heparin-binding" evidence="1">
    <location>
        <begin position="127"/>
        <end position="143"/>
    </location>
</feature>
<feature type="binding site" evidence="1">
    <location>
        <position position="33"/>
    </location>
    <ligand>
        <name>heparin</name>
        <dbReference type="ChEBI" id="CHEBI:28304"/>
    </ligand>
</feature>
<feature type="modified residue" description="N-acetylalanine" evidence="2">
    <location>
        <position position="2"/>
    </location>
</feature>
<dbReference type="EMBL" id="CR925957">
    <property type="protein sequence ID" value="CAI29610.1"/>
    <property type="status" value="ALT_INIT"/>
    <property type="molecule type" value="mRNA"/>
</dbReference>
<dbReference type="RefSeq" id="NP_001127073.1">
    <property type="nucleotide sequence ID" value="NM_001133601.1"/>
</dbReference>
<dbReference type="BMRB" id="Q5NVQ3"/>
<dbReference type="SMR" id="Q5NVQ3"/>
<dbReference type="FunCoup" id="Q5NVQ3">
    <property type="interactions" value="1486"/>
</dbReference>
<dbReference type="STRING" id="9601.ENSPPYP00000024593"/>
<dbReference type="Ensembl" id="ENSPPYT00000018497.2">
    <property type="protein sequence ID" value="ENSPPYP00000017782.1"/>
    <property type="gene ID" value="ENSPPYG00000015898.3"/>
</dbReference>
<dbReference type="GeneID" id="100174103"/>
<dbReference type="KEGG" id="pon:100174103"/>
<dbReference type="CTD" id="2246"/>
<dbReference type="eggNOG" id="KOG3885">
    <property type="taxonomic scope" value="Eukaryota"/>
</dbReference>
<dbReference type="GeneTree" id="ENSGT00940000160557"/>
<dbReference type="HOGENOM" id="CLU_081609_5_1_1"/>
<dbReference type="InParanoid" id="Q5NVQ3"/>
<dbReference type="OMA" id="KSWFVGL"/>
<dbReference type="OrthoDB" id="5987799at2759"/>
<dbReference type="TreeFam" id="TF317805"/>
<dbReference type="Proteomes" id="UP000001595">
    <property type="component" value="Chromosome 5"/>
</dbReference>
<dbReference type="GO" id="GO:0005938">
    <property type="term" value="C:cell cortex"/>
    <property type="evidence" value="ECO:0007669"/>
    <property type="project" value="UniProtKB-SubCell"/>
</dbReference>
<dbReference type="GO" id="GO:0005829">
    <property type="term" value="C:cytosol"/>
    <property type="evidence" value="ECO:0000250"/>
    <property type="project" value="UniProtKB"/>
</dbReference>
<dbReference type="GO" id="GO:0031012">
    <property type="term" value="C:extracellular matrix"/>
    <property type="evidence" value="ECO:0007669"/>
    <property type="project" value="Ensembl"/>
</dbReference>
<dbReference type="GO" id="GO:0005576">
    <property type="term" value="C:extracellular region"/>
    <property type="evidence" value="ECO:0000250"/>
    <property type="project" value="UniProtKB"/>
</dbReference>
<dbReference type="GO" id="GO:0005615">
    <property type="term" value="C:extracellular space"/>
    <property type="evidence" value="ECO:0000250"/>
    <property type="project" value="UniProtKB"/>
</dbReference>
<dbReference type="GO" id="GO:0005654">
    <property type="term" value="C:nucleoplasm"/>
    <property type="evidence" value="ECO:0007669"/>
    <property type="project" value="Ensembl"/>
</dbReference>
<dbReference type="GO" id="GO:0005104">
    <property type="term" value="F:fibroblast growth factor receptor binding"/>
    <property type="evidence" value="ECO:0000250"/>
    <property type="project" value="UniProtKB"/>
</dbReference>
<dbReference type="GO" id="GO:0008083">
    <property type="term" value="F:growth factor activity"/>
    <property type="evidence" value="ECO:0000250"/>
    <property type="project" value="UniProtKB"/>
</dbReference>
<dbReference type="GO" id="GO:0008201">
    <property type="term" value="F:heparin binding"/>
    <property type="evidence" value="ECO:0000250"/>
    <property type="project" value="UniProtKB"/>
</dbReference>
<dbReference type="GO" id="GO:0005178">
    <property type="term" value="F:integrin binding"/>
    <property type="evidence" value="ECO:0000250"/>
    <property type="project" value="UniProtKB"/>
</dbReference>
<dbReference type="GO" id="GO:0044548">
    <property type="term" value="F:S100 protein binding"/>
    <property type="evidence" value="ECO:0000250"/>
    <property type="project" value="UniProtKB"/>
</dbReference>
<dbReference type="GO" id="GO:0032148">
    <property type="term" value="P:activation of protein kinase B activity"/>
    <property type="evidence" value="ECO:0000250"/>
    <property type="project" value="UniProtKB"/>
</dbReference>
<dbReference type="GO" id="GO:0001525">
    <property type="term" value="P:angiogenesis"/>
    <property type="evidence" value="ECO:0007669"/>
    <property type="project" value="UniProtKB-KW"/>
</dbReference>
<dbReference type="GO" id="GO:0060681">
    <property type="term" value="P:branch elongation involved in ureteric bud branching"/>
    <property type="evidence" value="ECO:0000250"/>
    <property type="project" value="UniProtKB"/>
</dbReference>
<dbReference type="GO" id="GO:0030154">
    <property type="term" value="P:cell differentiation"/>
    <property type="evidence" value="ECO:0007669"/>
    <property type="project" value="UniProtKB-KW"/>
</dbReference>
<dbReference type="GO" id="GO:0034605">
    <property type="term" value="P:cellular response to heat"/>
    <property type="evidence" value="ECO:0000250"/>
    <property type="project" value="UniProtKB"/>
</dbReference>
<dbReference type="GO" id="GO:0050673">
    <property type="term" value="P:epithelial cell proliferation"/>
    <property type="evidence" value="ECO:0007669"/>
    <property type="project" value="Ensembl"/>
</dbReference>
<dbReference type="GO" id="GO:0008543">
    <property type="term" value="P:fibroblast growth factor receptor signaling pathway"/>
    <property type="evidence" value="ECO:0000250"/>
    <property type="project" value="UniProtKB"/>
</dbReference>
<dbReference type="GO" id="GO:0030324">
    <property type="term" value="P:lung development"/>
    <property type="evidence" value="ECO:0007669"/>
    <property type="project" value="Ensembl"/>
</dbReference>
<dbReference type="GO" id="GO:0072163">
    <property type="term" value="P:mesonephric epithelium development"/>
    <property type="evidence" value="ECO:0000250"/>
    <property type="project" value="UniProtKB"/>
</dbReference>
<dbReference type="GO" id="GO:0001759">
    <property type="term" value="P:organ induction"/>
    <property type="evidence" value="ECO:0007669"/>
    <property type="project" value="Ensembl"/>
</dbReference>
<dbReference type="GO" id="GO:0045766">
    <property type="term" value="P:positive regulation of angiogenesis"/>
    <property type="evidence" value="ECO:0000250"/>
    <property type="project" value="UniProtKB"/>
</dbReference>
<dbReference type="GO" id="GO:0051781">
    <property type="term" value="P:positive regulation of cell division"/>
    <property type="evidence" value="ECO:0000250"/>
    <property type="project" value="UniProtKB"/>
</dbReference>
<dbReference type="GO" id="GO:0030335">
    <property type="term" value="P:positive regulation of cell migration"/>
    <property type="evidence" value="ECO:0000250"/>
    <property type="project" value="UniProtKB"/>
</dbReference>
<dbReference type="GO" id="GO:0008284">
    <property type="term" value="P:positive regulation of cell population proliferation"/>
    <property type="evidence" value="ECO:0000250"/>
    <property type="project" value="UniProtKB"/>
</dbReference>
<dbReference type="GO" id="GO:0045542">
    <property type="term" value="P:positive regulation of cholesterol biosynthetic process"/>
    <property type="evidence" value="ECO:0000250"/>
    <property type="project" value="UniProtKB"/>
</dbReference>
<dbReference type="GO" id="GO:0010595">
    <property type="term" value="P:positive regulation of endothelial cell migration"/>
    <property type="evidence" value="ECO:0000250"/>
    <property type="project" value="UniProtKB"/>
</dbReference>
<dbReference type="GO" id="GO:0050679">
    <property type="term" value="P:positive regulation of epithelial cell proliferation"/>
    <property type="evidence" value="ECO:0007669"/>
    <property type="project" value="Ensembl"/>
</dbReference>
<dbReference type="GO" id="GO:0070374">
    <property type="term" value="P:positive regulation of ERK1 and ERK2 cascade"/>
    <property type="evidence" value="ECO:0000250"/>
    <property type="project" value="UniProtKB"/>
</dbReference>
<dbReference type="GO" id="GO:1902533">
    <property type="term" value="P:positive regulation of intracellular signal transduction"/>
    <property type="evidence" value="ECO:0000250"/>
    <property type="project" value="UniProtKB"/>
</dbReference>
<dbReference type="GO" id="GO:1903672">
    <property type="term" value="P:positive regulation of sprouting angiogenesis"/>
    <property type="evidence" value="ECO:0000250"/>
    <property type="project" value="UniProtKB"/>
</dbReference>
<dbReference type="GO" id="GO:0045944">
    <property type="term" value="P:positive regulation of transcription by RNA polymerase II"/>
    <property type="evidence" value="ECO:0000250"/>
    <property type="project" value="UniProtKB"/>
</dbReference>
<dbReference type="GO" id="GO:2000544">
    <property type="term" value="P:regulation of endothelial cell chemotaxis to fibroblast growth factor"/>
    <property type="evidence" value="ECO:0007669"/>
    <property type="project" value="Ensembl"/>
</dbReference>
<dbReference type="GO" id="GO:1901509">
    <property type="term" value="P:regulation of endothelial tube morphogenesis"/>
    <property type="evidence" value="ECO:0000250"/>
    <property type="project" value="UniProtKB"/>
</dbReference>
<dbReference type="GO" id="GO:0042060">
    <property type="term" value="P:wound healing"/>
    <property type="evidence" value="ECO:0007669"/>
    <property type="project" value="Ensembl"/>
</dbReference>
<dbReference type="CDD" id="cd23313">
    <property type="entry name" value="beta-trefoil_FGF1"/>
    <property type="match status" value="1"/>
</dbReference>
<dbReference type="FunFam" id="2.80.10.50:FF:000020">
    <property type="entry name" value="Fibroblast growth factor 1"/>
    <property type="match status" value="1"/>
</dbReference>
<dbReference type="Gene3D" id="2.80.10.50">
    <property type="match status" value="1"/>
</dbReference>
<dbReference type="InterPro" id="IPR002209">
    <property type="entry name" value="Fibroblast_GF_fam"/>
</dbReference>
<dbReference type="InterPro" id="IPR008996">
    <property type="entry name" value="IL1/FGF"/>
</dbReference>
<dbReference type="PANTHER" id="PTHR11486">
    <property type="entry name" value="FIBROBLAST GROWTH FACTOR"/>
    <property type="match status" value="1"/>
</dbReference>
<dbReference type="Pfam" id="PF00167">
    <property type="entry name" value="FGF"/>
    <property type="match status" value="1"/>
</dbReference>
<dbReference type="PRINTS" id="PR00263">
    <property type="entry name" value="HBGFFGF"/>
</dbReference>
<dbReference type="PRINTS" id="PR00262">
    <property type="entry name" value="IL1HBGF"/>
</dbReference>
<dbReference type="SMART" id="SM00442">
    <property type="entry name" value="FGF"/>
    <property type="match status" value="1"/>
</dbReference>
<dbReference type="SUPFAM" id="SSF50353">
    <property type="entry name" value="Cytokine"/>
    <property type="match status" value="1"/>
</dbReference>
<dbReference type="PROSITE" id="PS00247">
    <property type="entry name" value="HBGF_FGF"/>
    <property type="match status" value="1"/>
</dbReference>
<proteinExistence type="evidence at transcript level"/>
<accession>Q5NVQ3</accession>